<feature type="transit peptide" description="Mitochondrion" evidence="2">
    <location>
        <begin position="1"/>
        <end position="25"/>
    </location>
</feature>
<feature type="chain" id="PRO_0000425362" description="Aconitate hydratase, mitochondrial">
    <location>
        <begin position="26"/>
        <end position="783"/>
    </location>
</feature>
<feature type="region of interest" description="Disordered" evidence="3">
    <location>
        <begin position="524"/>
        <end position="555"/>
    </location>
</feature>
<feature type="binding site" evidence="1">
    <location>
        <position position="102"/>
    </location>
    <ligand>
        <name>substrate</name>
    </ligand>
</feature>
<feature type="binding site" evidence="1">
    <location>
        <begin position="195"/>
        <end position="197"/>
    </location>
    <ligand>
        <name>substrate</name>
    </ligand>
</feature>
<feature type="binding site" evidence="1">
    <location>
        <position position="388"/>
    </location>
    <ligand>
        <name>[4Fe-4S] cluster</name>
        <dbReference type="ChEBI" id="CHEBI:49883"/>
    </ligand>
</feature>
<feature type="binding site" evidence="1">
    <location>
        <position position="451"/>
    </location>
    <ligand>
        <name>[4Fe-4S] cluster</name>
        <dbReference type="ChEBI" id="CHEBI:49883"/>
    </ligand>
</feature>
<feature type="binding site" evidence="1">
    <location>
        <position position="454"/>
    </location>
    <ligand>
        <name>[4Fe-4S] cluster</name>
        <dbReference type="ChEBI" id="CHEBI:49883"/>
    </ligand>
</feature>
<feature type="binding site" evidence="1">
    <location>
        <position position="477"/>
    </location>
    <ligand>
        <name>substrate</name>
    </ligand>
</feature>
<feature type="binding site" evidence="1">
    <location>
        <position position="482"/>
    </location>
    <ligand>
        <name>substrate</name>
    </ligand>
</feature>
<feature type="binding site" evidence="1">
    <location>
        <position position="610"/>
    </location>
    <ligand>
        <name>substrate</name>
    </ligand>
</feature>
<feature type="binding site" evidence="1">
    <location>
        <begin position="673"/>
        <end position="674"/>
    </location>
    <ligand>
        <name>substrate</name>
    </ligand>
</feature>
<feature type="sequence conflict" description="In Ref. 3; AAN61439." evidence="6" ref="3">
    <original>GSCTNSSYED</original>
    <variation>LSSLLLLVES</variation>
    <location>
        <begin position="386"/>
        <end position="395"/>
    </location>
</feature>
<comment type="function">
    <text evidence="5">Catalyzes the isomerization of citrate to isocitrate via cis-aconitate, a step in the citric acid cycle. Also catalyzes the reversible dehydration of (R)-homocitrate to cis-homoaconitate, a step in the alpha-aminoadipate pathway for lysine biosynthesis.</text>
</comment>
<comment type="catalytic activity">
    <reaction evidence="5">
        <text>citrate = D-threo-isocitrate</text>
        <dbReference type="Rhea" id="RHEA:10336"/>
        <dbReference type="ChEBI" id="CHEBI:15562"/>
        <dbReference type="ChEBI" id="CHEBI:16947"/>
        <dbReference type="EC" id="4.2.1.3"/>
    </reaction>
</comment>
<comment type="catalytic activity">
    <reaction evidence="5">
        <text>(2R)-homocitrate = cis-homoaconitate + H2O</text>
        <dbReference type="Rhea" id="RHEA:26101"/>
        <dbReference type="ChEBI" id="CHEBI:15377"/>
        <dbReference type="ChEBI" id="CHEBI:58174"/>
        <dbReference type="ChEBI" id="CHEBI:58884"/>
    </reaction>
</comment>
<comment type="cofactor">
    <cofactor evidence="1">
        <name>[4Fe-4S] cluster</name>
        <dbReference type="ChEBI" id="CHEBI:49883"/>
    </cofactor>
    <text evidence="1">Binds 1 [4Fe-4S] cluster per subunit.</text>
</comment>
<comment type="pathway">
    <text>Carbohydrate metabolism; tricarboxylic acid cycle; isocitrate from oxaloacetate: step 2/2.</text>
</comment>
<comment type="pathway">
    <text>Amino-acid biosynthesis; L-lysine biosynthesis via AAA pathway; L-alpha-aminoadipate from 2-oxoglutarate: step 2/5.</text>
</comment>
<comment type="subcellular location">
    <subcellularLocation>
        <location evidence="1">Mitochondrion</location>
    </subcellularLocation>
</comment>
<comment type="induction">
    <text evidence="4">Down-regulated under iron limitation conditions.</text>
</comment>
<comment type="miscellaneous">
    <text evidence="7">The fermenting yeast S.cerevisiae has 2 aconitases, ACO1 essential for the citric acid cycle, and ACO2 specifically and exclusively contributing to lysine biosynthesis. In contrast, in respiring filamentous fungi the ACO2 homologs (acoB) seem enzymatically inactive and the ACO1 homolog (acoA) is solely responsible for these functions.</text>
</comment>
<comment type="similarity">
    <text evidence="6">Belongs to the aconitase/IPM isomerase family.</text>
</comment>
<comment type="sequence caution" evidence="6">
    <conflict type="erroneous gene model prediction">
        <sequence resource="EMBL-CDS" id="EAA62685"/>
    </conflict>
</comment>
<evidence type="ECO:0000250" key="1"/>
<evidence type="ECO:0000255" key="2"/>
<evidence type="ECO:0000256" key="3">
    <source>
        <dbReference type="SAM" id="MobiDB-lite"/>
    </source>
</evidence>
<evidence type="ECO:0000269" key="4">
    <source>
    </source>
</evidence>
<evidence type="ECO:0000269" key="5">
    <source>
    </source>
</evidence>
<evidence type="ECO:0000305" key="6"/>
<evidence type="ECO:0000305" key="7">
    <source>
    </source>
</evidence>
<proteinExistence type="evidence at protein level"/>
<keyword id="KW-0028">Amino-acid biosynthesis</keyword>
<keyword id="KW-0408">Iron</keyword>
<keyword id="KW-0411">Iron-sulfur</keyword>
<keyword id="KW-0456">Lyase</keyword>
<keyword id="KW-0457">Lysine biosynthesis</keyword>
<keyword id="KW-0479">Metal-binding</keyword>
<keyword id="KW-0496">Mitochondrion</keyword>
<keyword id="KW-1185">Reference proteome</keyword>
<keyword id="KW-0809">Transit peptide</keyword>
<keyword id="KW-0816">Tricarboxylic acid cycle</keyword>
<organism>
    <name type="scientific">Emericella nidulans (strain FGSC A4 / ATCC 38163 / CBS 112.46 / NRRL 194 / M139)</name>
    <name type="common">Aspergillus nidulans</name>
    <dbReference type="NCBI Taxonomy" id="227321"/>
    <lineage>
        <taxon>Eukaryota</taxon>
        <taxon>Fungi</taxon>
        <taxon>Dikarya</taxon>
        <taxon>Ascomycota</taxon>
        <taxon>Pezizomycotina</taxon>
        <taxon>Eurotiomycetes</taxon>
        <taxon>Eurotiomycetidae</taxon>
        <taxon>Eurotiales</taxon>
        <taxon>Aspergillaceae</taxon>
        <taxon>Aspergillus</taxon>
        <taxon>Aspergillus subgen. Nidulantes</taxon>
    </lineage>
</organism>
<sequence length="783" mass="84968">MITTRLARMGALAPKSRLLFGTRGMATVADLDKKVEMCNLEKGNYINYKKMSENLDVVRRRLTRPLTYAEKILYSHLDDPQNQDIERGKSYLKLRPDRVACQDATAQMAILQFMSAGMPSVATPTTVHCDHLIEAQLGGEKDLARANEINKEVYDFLASSTAKYNIGFWKPGSGIIHQIILENYAFPGGLMIGTDSHTPNAGGLAIAAIGVGGADAVDVMAGLPWELKAPKVIGVRLTGEMSGWTAPKDIILKVAGLLTVKGGTGAIIEYHGPGVNSLSATGMATICNMGAEIGATTSLFPFNDRMYDYLKATKRQQIGDFARSYAKDLREDEGAEYDQLIEINLSELEPHINGPFTPDLATPISQFKEAVKANGWPEELKVGLIGSCTNSSYEDMSRAASIAQDALDHGLKAKSIFTVTPGSEQIRATIERDGQLKTLEEFGGVILANACGPCIGQWDRKDVKKGTPNSIVSSYNRNFTGRNDANPATHAFVTSPDLVVALSIAGTLNFNPLTDTLKDKDGKEFKLKAPTGDGLPSRGYDPGRDTYQAPPTDRSSVDVAVSPSSDRLQLLAGFQPWDGKDATGIPILIKCQGKTTTDHISMAGPWLKYRGHLDNISNNMLIGAVNAENGEANKIKNVFTGEYGAVPATARDYKARGVKWVVIGDWNYGEGSSREHAALEPRHLGGLAIITRSFARIHETNLKKQGMLPLTFSDPADYDRIPPDATVDLLCTELAVDKPMTLRVHPKDGASFDVKLSHTFNESQIEWFKDGSALNTMARKSGN</sequence>
<reference key="1">
    <citation type="journal article" date="2005" name="Nature">
        <title>Sequencing of Aspergillus nidulans and comparative analysis with A. fumigatus and A. oryzae.</title>
        <authorList>
            <person name="Galagan J.E."/>
            <person name="Calvo S.E."/>
            <person name="Cuomo C."/>
            <person name="Ma L.-J."/>
            <person name="Wortman J.R."/>
            <person name="Batzoglou S."/>
            <person name="Lee S.-I."/>
            <person name="Bastuerkmen M."/>
            <person name="Spevak C.C."/>
            <person name="Clutterbuck J."/>
            <person name="Kapitonov V."/>
            <person name="Jurka J."/>
            <person name="Scazzocchio C."/>
            <person name="Farman M.L."/>
            <person name="Butler J."/>
            <person name="Purcell S."/>
            <person name="Harris S."/>
            <person name="Braus G.H."/>
            <person name="Draht O."/>
            <person name="Busch S."/>
            <person name="D'Enfert C."/>
            <person name="Bouchier C."/>
            <person name="Goldman G.H."/>
            <person name="Bell-Pedersen D."/>
            <person name="Griffiths-Jones S."/>
            <person name="Doonan J.H."/>
            <person name="Yu J."/>
            <person name="Vienken K."/>
            <person name="Pain A."/>
            <person name="Freitag M."/>
            <person name="Selker E.U."/>
            <person name="Archer D.B."/>
            <person name="Penalva M.A."/>
            <person name="Oakley B.R."/>
            <person name="Momany M."/>
            <person name="Tanaka T."/>
            <person name="Kumagai T."/>
            <person name="Asai K."/>
            <person name="Machida M."/>
            <person name="Nierman W.C."/>
            <person name="Denning D.W."/>
            <person name="Caddick M.X."/>
            <person name="Hynes M."/>
            <person name="Paoletti M."/>
            <person name="Fischer R."/>
            <person name="Miller B.L."/>
            <person name="Dyer P.S."/>
            <person name="Sachs M.S."/>
            <person name="Osmani S.A."/>
            <person name="Birren B.W."/>
        </authorList>
    </citation>
    <scope>NUCLEOTIDE SEQUENCE [LARGE SCALE GENOMIC DNA]</scope>
    <source>
        <strain>FGSC A4 / ATCC 38163 / CBS 112.46 / NRRL 194 / M139</strain>
    </source>
</reference>
<reference key="2">
    <citation type="journal article" date="2009" name="Fungal Genet. Biol.">
        <title>The 2008 update of the Aspergillus nidulans genome annotation: a community effort.</title>
        <authorList>
            <person name="Wortman J.R."/>
            <person name="Gilsenan J.M."/>
            <person name="Joardar V."/>
            <person name="Deegan J."/>
            <person name="Clutterbuck J."/>
            <person name="Andersen M.R."/>
            <person name="Archer D."/>
            <person name="Bencina M."/>
            <person name="Braus G."/>
            <person name="Coutinho P."/>
            <person name="von Dohren H."/>
            <person name="Doonan J."/>
            <person name="Driessen A.J."/>
            <person name="Durek P."/>
            <person name="Espeso E."/>
            <person name="Fekete E."/>
            <person name="Flipphi M."/>
            <person name="Estrada C.G."/>
            <person name="Geysens S."/>
            <person name="Goldman G."/>
            <person name="de Groot P.W."/>
            <person name="Hansen K."/>
            <person name="Harris S.D."/>
            <person name="Heinekamp T."/>
            <person name="Helmstaedt K."/>
            <person name="Henrissat B."/>
            <person name="Hofmann G."/>
            <person name="Homan T."/>
            <person name="Horio T."/>
            <person name="Horiuchi H."/>
            <person name="James S."/>
            <person name="Jones M."/>
            <person name="Karaffa L."/>
            <person name="Karanyi Z."/>
            <person name="Kato M."/>
            <person name="Keller N."/>
            <person name="Kelly D.E."/>
            <person name="Kiel J.A."/>
            <person name="Kim J.M."/>
            <person name="van der Klei I.J."/>
            <person name="Klis F.M."/>
            <person name="Kovalchuk A."/>
            <person name="Krasevec N."/>
            <person name="Kubicek C.P."/>
            <person name="Liu B."/>
            <person name="Maccabe A."/>
            <person name="Meyer V."/>
            <person name="Mirabito P."/>
            <person name="Miskei M."/>
            <person name="Mos M."/>
            <person name="Mullins J."/>
            <person name="Nelson D.R."/>
            <person name="Nielsen J."/>
            <person name="Oakley B.R."/>
            <person name="Osmani S.A."/>
            <person name="Pakula T."/>
            <person name="Paszewski A."/>
            <person name="Paulsen I."/>
            <person name="Pilsyk S."/>
            <person name="Pocsi I."/>
            <person name="Punt P.J."/>
            <person name="Ram A.F."/>
            <person name="Ren Q."/>
            <person name="Robellet X."/>
            <person name="Robson G."/>
            <person name="Seiboth B."/>
            <person name="van Solingen P."/>
            <person name="Specht T."/>
            <person name="Sun J."/>
            <person name="Taheri-Talesh N."/>
            <person name="Takeshita N."/>
            <person name="Ussery D."/>
            <person name="vanKuyk P.A."/>
            <person name="Visser H."/>
            <person name="van de Vondervoort P.J."/>
            <person name="de Vries R.P."/>
            <person name="Walton J."/>
            <person name="Xiang X."/>
            <person name="Xiong Y."/>
            <person name="Zeng A.P."/>
            <person name="Brandt B.W."/>
            <person name="Cornell M.J."/>
            <person name="van den Hondel C.A."/>
            <person name="Visser J."/>
            <person name="Oliver S.G."/>
            <person name="Turner G."/>
        </authorList>
    </citation>
    <scope>GENOME REANNOTATION</scope>
    <source>
        <strain>FGSC A4 / ATCC 38163 / CBS 112.46 / NRRL 194 / M139</strain>
    </source>
</reference>
<reference key="3">
    <citation type="journal article" date="2002" name="Appl. Environ. Microbiol.">
        <title>Regulation of freA, acoA, lysF, and cycA expression by iron availability in Aspergillus nidulans.</title>
        <authorList>
            <person name="Oberegger H."/>
            <person name="Schoeser M."/>
            <person name="Zadra I."/>
            <person name="Schrettl M."/>
            <person name="Parson W."/>
            <person name="Haas H."/>
        </authorList>
    </citation>
    <scope>NUCLEOTIDE SEQUENCE [MRNA] OF 386-783</scope>
    <scope>INDUCTION</scope>
</reference>
<reference key="4">
    <citation type="journal article" date="2012" name="Mol. Microbiol.">
        <title>The fungal alpha-aminoadipate pathway for lysine biosynthesis requires two enzymes of the aconitase family for the isomerization of homocitrate to homoisocitrate.</title>
        <authorList>
            <person name="Fazius F."/>
            <person name="Shelest E."/>
            <person name="Gebhardt P."/>
            <person name="Brock M."/>
        </authorList>
    </citation>
    <scope>FUNCTION</scope>
    <scope>CATALYTIC ACTIVITY</scope>
    <scope>MISCELLANEOUS</scope>
</reference>
<accession>C8VG90</accession>
<accession>Q5B1Q5</accession>
<accession>Q8J267</accession>
<dbReference type="EC" id="4.2.1.3" evidence="5"/>
<dbReference type="EC" id="4.2.1.-" evidence="5"/>
<dbReference type="EMBL" id="AACD01000094">
    <property type="protein sequence ID" value="EAA62685.1"/>
    <property type="status" value="ALT_SEQ"/>
    <property type="molecule type" value="Genomic_DNA"/>
</dbReference>
<dbReference type="EMBL" id="AF515630">
    <property type="protein sequence ID" value="AAN61439.1"/>
    <property type="molecule type" value="mRNA"/>
</dbReference>
<dbReference type="EMBL" id="BN001305">
    <property type="protein sequence ID" value="CBF81741.1"/>
    <property type="molecule type" value="Genomic_DNA"/>
</dbReference>
<dbReference type="RefSeq" id="XP_663129.1">
    <property type="nucleotide sequence ID" value="XM_658037.1"/>
</dbReference>
<dbReference type="SMR" id="C8VG90"/>
<dbReference type="FunCoup" id="C8VG90">
    <property type="interactions" value="890"/>
</dbReference>
<dbReference type="STRING" id="227321.C8VG90"/>
<dbReference type="EnsemblFungi" id="CBF81741">
    <property type="protein sequence ID" value="CBF81741"/>
    <property type="gene ID" value="ANIA_05525"/>
</dbReference>
<dbReference type="VEuPathDB" id="FungiDB:AN5525"/>
<dbReference type="eggNOG" id="KOG0453">
    <property type="taxonomic scope" value="Eukaryota"/>
</dbReference>
<dbReference type="HOGENOM" id="CLU_006714_2_2_1"/>
<dbReference type="InParanoid" id="C8VG90"/>
<dbReference type="OMA" id="KKQGMLG"/>
<dbReference type="OrthoDB" id="2224430at2759"/>
<dbReference type="UniPathway" id="UPA00033">
    <property type="reaction ID" value="UER00029"/>
</dbReference>
<dbReference type="UniPathway" id="UPA00223">
    <property type="reaction ID" value="UER00718"/>
</dbReference>
<dbReference type="Proteomes" id="UP000000560">
    <property type="component" value="Chromosome V"/>
</dbReference>
<dbReference type="GO" id="GO:0005829">
    <property type="term" value="C:cytosol"/>
    <property type="evidence" value="ECO:0000318"/>
    <property type="project" value="GO_Central"/>
</dbReference>
<dbReference type="GO" id="GO:0042645">
    <property type="term" value="C:mitochondrial nucleoid"/>
    <property type="evidence" value="ECO:0007669"/>
    <property type="project" value="EnsemblFungi"/>
</dbReference>
<dbReference type="GO" id="GO:0005739">
    <property type="term" value="C:mitochondrion"/>
    <property type="evidence" value="ECO:0000318"/>
    <property type="project" value="GO_Central"/>
</dbReference>
<dbReference type="GO" id="GO:0051539">
    <property type="term" value="F:4 iron, 4 sulfur cluster binding"/>
    <property type="evidence" value="ECO:0000318"/>
    <property type="project" value="GO_Central"/>
</dbReference>
<dbReference type="GO" id="GO:0003994">
    <property type="term" value="F:aconitate hydratase activity"/>
    <property type="evidence" value="ECO:0000314"/>
    <property type="project" value="AspGD"/>
</dbReference>
<dbReference type="GO" id="GO:0003690">
    <property type="term" value="F:double-stranded DNA binding"/>
    <property type="evidence" value="ECO:0007669"/>
    <property type="project" value="EnsemblFungi"/>
</dbReference>
<dbReference type="GO" id="GO:0046872">
    <property type="term" value="F:metal ion binding"/>
    <property type="evidence" value="ECO:0007669"/>
    <property type="project" value="UniProtKB-KW"/>
</dbReference>
<dbReference type="GO" id="GO:0003729">
    <property type="term" value="F:mRNA binding"/>
    <property type="evidence" value="ECO:0007669"/>
    <property type="project" value="EnsemblFungi"/>
</dbReference>
<dbReference type="GO" id="GO:0003697">
    <property type="term" value="F:single-stranded DNA binding"/>
    <property type="evidence" value="ECO:0007669"/>
    <property type="project" value="EnsemblFungi"/>
</dbReference>
<dbReference type="GO" id="GO:0019878">
    <property type="term" value="P:lysine biosynthetic process via aminoadipic acid"/>
    <property type="evidence" value="ECO:0007669"/>
    <property type="project" value="UniProtKB-UniPathway"/>
</dbReference>
<dbReference type="GO" id="GO:0000002">
    <property type="term" value="P:mitochondrial genome maintenance"/>
    <property type="evidence" value="ECO:0007669"/>
    <property type="project" value="EnsemblFungi"/>
</dbReference>
<dbReference type="GO" id="GO:0006099">
    <property type="term" value="P:tricarboxylic acid cycle"/>
    <property type="evidence" value="ECO:0000318"/>
    <property type="project" value="GO_Central"/>
</dbReference>
<dbReference type="CDD" id="cd01584">
    <property type="entry name" value="AcnA_Mitochondrial"/>
    <property type="match status" value="1"/>
</dbReference>
<dbReference type="FunFam" id="3.20.19.10:FF:000002">
    <property type="entry name" value="Aconitate hydratase, mitochondrial"/>
    <property type="match status" value="1"/>
</dbReference>
<dbReference type="FunFam" id="3.30.499.10:FF:000003">
    <property type="entry name" value="Aconitate hydratase, mitochondrial"/>
    <property type="match status" value="1"/>
</dbReference>
<dbReference type="FunFam" id="3.30.499.10:FF:000004">
    <property type="entry name" value="Aconitate hydratase, mitochondrial"/>
    <property type="match status" value="1"/>
</dbReference>
<dbReference type="FunFam" id="3.40.1060.10:FF:000001">
    <property type="entry name" value="Aconitate hydratase, mitochondrial"/>
    <property type="match status" value="1"/>
</dbReference>
<dbReference type="Gene3D" id="3.40.1060.10">
    <property type="entry name" value="Aconitase, Domain 2"/>
    <property type="match status" value="1"/>
</dbReference>
<dbReference type="Gene3D" id="3.30.499.10">
    <property type="entry name" value="Aconitase, domain 3"/>
    <property type="match status" value="2"/>
</dbReference>
<dbReference type="Gene3D" id="3.20.19.10">
    <property type="entry name" value="Aconitase, domain 4"/>
    <property type="match status" value="1"/>
</dbReference>
<dbReference type="InterPro" id="IPR015931">
    <property type="entry name" value="Acnase/IPM_dHydase_lsu_aba_1/3"/>
</dbReference>
<dbReference type="InterPro" id="IPR001030">
    <property type="entry name" value="Acoase/IPM_deHydtase_lsu_aba"/>
</dbReference>
<dbReference type="InterPro" id="IPR015928">
    <property type="entry name" value="Aconitase/3IPM_dehydase_swvl"/>
</dbReference>
<dbReference type="InterPro" id="IPR050926">
    <property type="entry name" value="Aconitase/IPM_isomerase"/>
</dbReference>
<dbReference type="InterPro" id="IPR018136">
    <property type="entry name" value="Aconitase_4Fe-4S_BS"/>
</dbReference>
<dbReference type="InterPro" id="IPR036008">
    <property type="entry name" value="Aconitase_4Fe-4S_dom"/>
</dbReference>
<dbReference type="InterPro" id="IPR015932">
    <property type="entry name" value="Aconitase_dom2"/>
</dbReference>
<dbReference type="InterPro" id="IPR006248">
    <property type="entry name" value="Aconitase_mito-like"/>
</dbReference>
<dbReference type="InterPro" id="IPR000573">
    <property type="entry name" value="AconitaseA/IPMdHydase_ssu_swvl"/>
</dbReference>
<dbReference type="NCBIfam" id="TIGR01340">
    <property type="entry name" value="aconitase_mito"/>
    <property type="match status" value="1"/>
</dbReference>
<dbReference type="NCBIfam" id="NF005558">
    <property type="entry name" value="PRK07229.1"/>
    <property type="match status" value="1"/>
</dbReference>
<dbReference type="PANTHER" id="PTHR43160">
    <property type="entry name" value="ACONITATE HYDRATASE B"/>
    <property type="match status" value="1"/>
</dbReference>
<dbReference type="PANTHER" id="PTHR43160:SF3">
    <property type="entry name" value="ACONITATE HYDRATASE, MITOCHONDRIAL"/>
    <property type="match status" value="1"/>
</dbReference>
<dbReference type="Pfam" id="PF00330">
    <property type="entry name" value="Aconitase"/>
    <property type="match status" value="1"/>
</dbReference>
<dbReference type="Pfam" id="PF00694">
    <property type="entry name" value="Aconitase_C"/>
    <property type="match status" value="1"/>
</dbReference>
<dbReference type="PRINTS" id="PR00415">
    <property type="entry name" value="ACONITASE"/>
</dbReference>
<dbReference type="SUPFAM" id="SSF53732">
    <property type="entry name" value="Aconitase iron-sulfur domain"/>
    <property type="match status" value="1"/>
</dbReference>
<dbReference type="SUPFAM" id="SSF52016">
    <property type="entry name" value="LeuD/IlvD-like"/>
    <property type="match status" value="1"/>
</dbReference>
<dbReference type="PROSITE" id="PS00450">
    <property type="entry name" value="ACONITASE_1"/>
    <property type="match status" value="1"/>
</dbReference>
<dbReference type="PROSITE" id="PS01244">
    <property type="entry name" value="ACONITASE_2"/>
    <property type="match status" value="1"/>
</dbReference>
<gene>
    <name type="primary">acoA</name>
    <name type="ORF">AN5525</name>
</gene>
<name>ACON_EMENI</name>
<protein>
    <recommendedName>
        <fullName>Aconitate hydratase, mitochondrial</fullName>
        <shortName>Aconitase</shortName>
        <ecNumber evidence="5">4.2.1.3</ecNumber>
    </recommendedName>
    <alternativeName>
        <fullName>Citrate hydro-lyase</fullName>
    </alternativeName>
    <alternativeName>
        <fullName>Homocitrate dehydratase</fullName>
        <ecNumber evidence="5">4.2.1.-</ecNumber>
    </alternativeName>
</protein>